<keyword id="KW-0010">Activator</keyword>
<keyword id="KW-0112">Calmodulin-binding</keyword>
<keyword id="KW-0963">Cytoplasm</keyword>
<keyword id="KW-0221">Differentiation</keyword>
<keyword id="KW-0238">DNA-binding</keyword>
<keyword id="KW-0539">Nucleus</keyword>
<keyword id="KW-1185">Reference proteome</keyword>
<keyword id="KW-0726">Sexual differentiation</keyword>
<keyword id="KW-0804">Transcription</keyword>
<keyword id="KW-0805">Transcription regulation</keyword>
<proteinExistence type="inferred from homology"/>
<organism>
    <name type="scientific">Callorhinus ursinus</name>
    <name type="common">Northern fur seal</name>
    <dbReference type="NCBI Taxonomy" id="34884"/>
    <lineage>
        <taxon>Eukaryota</taxon>
        <taxon>Metazoa</taxon>
        <taxon>Chordata</taxon>
        <taxon>Craniata</taxon>
        <taxon>Vertebrata</taxon>
        <taxon>Euteleostomi</taxon>
        <taxon>Mammalia</taxon>
        <taxon>Eutheria</taxon>
        <taxon>Laurasiatheria</taxon>
        <taxon>Carnivora</taxon>
        <taxon>Caniformia</taxon>
        <taxon>Pinnipedia</taxon>
        <taxon>Otariidae</taxon>
        <taxon>Callorhinus</taxon>
    </lineage>
</organism>
<dbReference type="EMBL" id="AY424652">
    <property type="protein sequence ID" value="AAR10363.1"/>
    <property type="molecule type" value="Genomic_DNA"/>
</dbReference>
<dbReference type="SMR" id="Q6TC43"/>
<dbReference type="InParanoid" id="Q6TC43"/>
<dbReference type="Proteomes" id="UP000286641">
    <property type="component" value="Unplaced"/>
</dbReference>
<dbReference type="GO" id="GO:0005737">
    <property type="term" value="C:cytoplasm"/>
    <property type="evidence" value="ECO:0007669"/>
    <property type="project" value="UniProtKB-SubCell"/>
</dbReference>
<dbReference type="GO" id="GO:0016607">
    <property type="term" value="C:nuclear speck"/>
    <property type="evidence" value="ECO:0007669"/>
    <property type="project" value="UniProtKB-SubCell"/>
</dbReference>
<dbReference type="GO" id="GO:0005634">
    <property type="term" value="C:nucleus"/>
    <property type="evidence" value="ECO:0000250"/>
    <property type="project" value="UniProtKB"/>
</dbReference>
<dbReference type="GO" id="GO:0005516">
    <property type="term" value="F:calmodulin binding"/>
    <property type="evidence" value="ECO:0007669"/>
    <property type="project" value="UniProtKB-KW"/>
</dbReference>
<dbReference type="GO" id="GO:0001228">
    <property type="term" value="F:DNA-binding transcription activator activity, RNA polymerase II-specific"/>
    <property type="evidence" value="ECO:0007669"/>
    <property type="project" value="TreeGrafter"/>
</dbReference>
<dbReference type="GO" id="GO:0000978">
    <property type="term" value="F:RNA polymerase II cis-regulatory region sequence-specific DNA binding"/>
    <property type="evidence" value="ECO:0007669"/>
    <property type="project" value="TreeGrafter"/>
</dbReference>
<dbReference type="GO" id="GO:0030154">
    <property type="term" value="P:cell differentiation"/>
    <property type="evidence" value="ECO:0007669"/>
    <property type="project" value="UniProtKB-KW"/>
</dbReference>
<dbReference type="GO" id="GO:0030238">
    <property type="term" value="P:male sex determination"/>
    <property type="evidence" value="ECO:0007669"/>
    <property type="project" value="InterPro"/>
</dbReference>
<dbReference type="GO" id="GO:0007548">
    <property type="term" value="P:sex differentiation"/>
    <property type="evidence" value="ECO:0007669"/>
    <property type="project" value="UniProtKB-KW"/>
</dbReference>
<dbReference type="CDD" id="cd22034">
    <property type="entry name" value="HMG-box_SoxA_SRY"/>
    <property type="match status" value="1"/>
</dbReference>
<dbReference type="FunFam" id="1.10.30.10:FF:000002">
    <property type="entry name" value="transcription factor Sox-2"/>
    <property type="match status" value="1"/>
</dbReference>
<dbReference type="Gene3D" id="1.10.30.10">
    <property type="entry name" value="High mobility group box domain"/>
    <property type="match status" value="1"/>
</dbReference>
<dbReference type="InterPro" id="IPR009071">
    <property type="entry name" value="HMG_box_dom"/>
</dbReference>
<dbReference type="InterPro" id="IPR036910">
    <property type="entry name" value="HMG_box_dom_sf"/>
</dbReference>
<dbReference type="InterPro" id="IPR017253">
    <property type="entry name" value="SRY"/>
</dbReference>
<dbReference type="InterPro" id="IPR050140">
    <property type="entry name" value="SRY-related_HMG-box_TF-like"/>
</dbReference>
<dbReference type="PANTHER" id="PTHR10270:SF161">
    <property type="entry name" value="SEX-DETERMINING REGION Y PROTEIN"/>
    <property type="match status" value="1"/>
</dbReference>
<dbReference type="PANTHER" id="PTHR10270">
    <property type="entry name" value="SOX TRANSCRIPTION FACTOR"/>
    <property type="match status" value="1"/>
</dbReference>
<dbReference type="Pfam" id="PF00505">
    <property type="entry name" value="HMG_box"/>
    <property type="match status" value="1"/>
</dbReference>
<dbReference type="PIRSF" id="PIRSF037653">
    <property type="entry name" value="SRY"/>
    <property type="match status" value="1"/>
</dbReference>
<dbReference type="SMART" id="SM00398">
    <property type="entry name" value="HMG"/>
    <property type="match status" value="1"/>
</dbReference>
<dbReference type="SUPFAM" id="SSF47095">
    <property type="entry name" value="HMG-box"/>
    <property type="match status" value="1"/>
</dbReference>
<dbReference type="PROSITE" id="PS50118">
    <property type="entry name" value="HMG_BOX_2"/>
    <property type="match status" value="1"/>
</dbReference>
<name>SRY_CALUR</name>
<reference key="1">
    <citation type="submission" date="2003-09" db="EMBL/GenBank/DDBJ databases">
        <title>A phylogeny of the pinnipeds from mitochondrial and single copy nuclear gene sequences.</title>
        <authorList>
            <person name="Kinnear M.W."/>
            <person name="Walker G."/>
            <person name="Amos W."/>
        </authorList>
    </citation>
    <scope>NUCLEOTIDE SEQUENCE [GENOMIC DNA]</scope>
</reference>
<evidence type="ECO:0000250" key="1">
    <source>
        <dbReference type="UniProtKB" id="P36394"/>
    </source>
</evidence>
<evidence type="ECO:0000250" key="2">
    <source>
        <dbReference type="UniProtKB" id="Q05066"/>
    </source>
</evidence>
<evidence type="ECO:0000255" key="3">
    <source>
        <dbReference type="PROSITE-ProRule" id="PRU00267"/>
    </source>
</evidence>
<evidence type="ECO:0000256" key="4">
    <source>
        <dbReference type="SAM" id="MobiDB-lite"/>
    </source>
</evidence>
<evidence type="ECO:0000305" key="5"/>
<protein>
    <recommendedName>
        <fullName>Sex-determining region Y protein</fullName>
    </recommendedName>
    <alternativeName>
        <fullName>Testis-determining factor</fullName>
    </alternativeName>
</protein>
<feature type="chain" id="PRO_0000048650" description="Sex-determining region Y protein">
    <location>
        <begin position="1"/>
        <end position="220"/>
    </location>
</feature>
<feature type="DNA-binding region" description="HMG box" evidence="3">
    <location>
        <begin position="54"/>
        <end position="122"/>
    </location>
</feature>
<feature type="region of interest" description="Disordered" evidence="4">
    <location>
        <begin position="193"/>
        <end position="220"/>
    </location>
</feature>
<comment type="function">
    <text evidence="1 2">Transcriptional regulator that controls a genetic switch in male development. It is necessary and sufficient for initiating male sex determination by directing the development of supporting cell precursors (pre-Sertoli cells) as Sertoli rather than granulosa cells. Involved in different aspects of gene regulation including promoter activation or repression. Binds to the DNA consensus sequence 5'-[AT]AACAA[AT]-3'. SRY HMG box recognizes DNA by partial intercalation in the minor groove and promotes DNA bending. Also involved in pre-mRNA splicing (By similarity). In male adult brain involved in the maintenance of motor functions of dopaminergic neurons (By similarity).</text>
</comment>
<comment type="subunit">
    <text evidence="2">Interacts with CALM, EP300, HDAC3, KPNB1, ZNF208 isoform KRAB-O, PARP1, SLC9A3R2 and WT1. The interaction with EP300 modulates its DNA-binding activity. The interaction with KPNB1 is sensitive to dissociation by Ran in the GTP-bound form. Interaction with PARP1 impaired its DNA-binding activity.</text>
</comment>
<comment type="subcellular location">
    <subcellularLocation>
        <location evidence="2">Nucleus speckle</location>
    </subcellularLocation>
    <subcellularLocation>
        <location evidence="2">Cytoplasm</location>
    </subcellularLocation>
    <subcellularLocation>
        <location evidence="2">Nucleus</location>
    </subcellularLocation>
</comment>
<comment type="similarity">
    <text evidence="5">Belongs to the SRY family.</text>
</comment>
<comment type="online information" name="Protein Spotlight">
    <link uri="https://www.proteinspotlight.org/back_issues/080"/>
    <text>The tenuous nature of sex - Issue 80 of March 2007</text>
</comment>
<gene>
    <name type="primary">SRY</name>
    <name type="synonym">TDF</name>
</gene>
<sequence length="220" mass="25719">MFGVLNSDDHRAAIQQRNILAFGRTSSELWTSNPTSNYWCETRGNGRDSGQNRVRRPMNAFMVWSRDQRRKVALENPQMQNSEISKQLGYQWKMLTEAEKWPFFEEAQRLQAMHREKYPDYKYRPRRKALPQKSDKFLPAASSTLLCRQVLVDKWYPFTYRDSCSRATHSHMEDQLSSSQPVNIANSLLQQEHHYSSTSLRGSPETLATHLSADPPFYPK</sequence>
<accession>Q6TC43</accession>